<dbReference type="EC" id="2.1.1.182" evidence="1"/>
<dbReference type="EMBL" id="AE014291">
    <property type="protein sequence ID" value="AAN29611.1"/>
    <property type="molecule type" value="Genomic_DNA"/>
</dbReference>
<dbReference type="EMBL" id="CP002997">
    <property type="protein sequence ID" value="AEM18028.1"/>
    <property type="molecule type" value="Genomic_DNA"/>
</dbReference>
<dbReference type="RefSeq" id="WP_002963824.1">
    <property type="nucleotide sequence ID" value="NZ_KN046804.1"/>
</dbReference>
<dbReference type="SMR" id="Q8G1N0"/>
<dbReference type="GeneID" id="97533994"/>
<dbReference type="KEGG" id="bms:BR0682"/>
<dbReference type="KEGG" id="bsi:BS1330_I0678"/>
<dbReference type="PATRIC" id="fig|204722.21.peg.1493"/>
<dbReference type="HOGENOM" id="CLU_041220_0_1_5"/>
<dbReference type="PhylomeDB" id="Q8G1N0"/>
<dbReference type="Proteomes" id="UP000007104">
    <property type="component" value="Chromosome I"/>
</dbReference>
<dbReference type="GO" id="GO:0005829">
    <property type="term" value="C:cytosol"/>
    <property type="evidence" value="ECO:0007669"/>
    <property type="project" value="TreeGrafter"/>
</dbReference>
<dbReference type="GO" id="GO:0052908">
    <property type="term" value="F:16S rRNA (adenine(1518)-N(6)/adenine(1519)-N(6))-dimethyltransferase activity"/>
    <property type="evidence" value="ECO:0007669"/>
    <property type="project" value="UniProtKB-EC"/>
</dbReference>
<dbReference type="GO" id="GO:0003723">
    <property type="term" value="F:RNA binding"/>
    <property type="evidence" value="ECO:0007669"/>
    <property type="project" value="UniProtKB-KW"/>
</dbReference>
<dbReference type="CDD" id="cd02440">
    <property type="entry name" value="AdoMet_MTases"/>
    <property type="match status" value="1"/>
</dbReference>
<dbReference type="FunFam" id="1.10.8.100:FF:000001">
    <property type="entry name" value="Ribosomal RNA small subunit methyltransferase A"/>
    <property type="match status" value="1"/>
</dbReference>
<dbReference type="Gene3D" id="1.10.8.100">
    <property type="entry name" value="Ribosomal RNA adenine dimethylase-like, domain 2"/>
    <property type="match status" value="1"/>
</dbReference>
<dbReference type="Gene3D" id="3.40.50.150">
    <property type="entry name" value="Vaccinia Virus protein VP39"/>
    <property type="match status" value="1"/>
</dbReference>
<dbReference type="HAMAP" id="MF_00607">
    <property type="entry name" value="16SrRNA_methyltr_A"/>
    <property type="match status" value="1"/>
</dbReference>
<dbReference type="InterPro" id="IPR001737">
    <property type="entry name" value="KsgA/Erm"/>
</dbReference>
<dbReference type="InterPro" id="IPR023165">
    <property type="entry name" value="rRNA_Ade_diMease-like_C"/>
</dbReference>
<dbReference type="InterPro" id="IPR020596">
    <property type="entry name" value="rRNA_Ade_Mease_Trfase_CS"/>
</dbReference>
<dbReference type="InterPro" id="IPR020598">
    <property type="entry name" value="rRNA_Ade_methylase_Trfase_N"/>
</dbReference>
<dbReference type="InterPro" id="IPR011530">
    <property type="entry name" value="rRNA_adenine_dimethylase"/>
</dbReference>
<dbReference type="InterPro" id="IPR029063">
    <property type="entry name" value="SAM-dependent_MTases_sf"/>
</dbReference>
<dbReference type="NCBIfam" id="TIGR00755">
    <property type="entry name" value="ksgA"/>
    <property type="match status" value="1"/>
</dbReference>
<dbReference type="PANTHER" id="PTHR11727">
    <property type="entry name" value="DIMETHYLADENOSINE TRANSFERASE"/>
    <property type="match status" value="1"/>
</dbReference>
<dbReference type="PANTHER" id="PTHR11727:SF7">
    <property type="entry name" value="DIMETHYLADENOSINE TRANSFERASE-RELATED"/>
    <property type="match status" value="1"/>
</dbReference>
<dbReference type="Pfam" id="PF00398">
    <property type="entry name" value="RrnaAD"/>
    <property type="match status" value="1"/>
</dbReference>
<dbReference type="SMART" id="SM00650">
    <property type="entry name" value="rADc"/>
    <property type="match status" value="1"/>
</dbReference>
<dbReference type="SUPFAM" id="SSF53335">
    <property type="entry name" value="S-adenosyl-L-methionine-dependent methyltransferases"/>
    <property type="match status" value="1"/>
</dbReference>
<dbReference type="PROSITE" id="PS01131">
    <property type="entry name" value="RRNA_A_DIMETH"/>
    <property type="match status" value="1"/>
</dbReference>
<dbReference type="PROSITE" id="PS51689">
    <property type="entry name" value="SAM_RNA_A_N6_MT"/>
    <property type="match status" value="1"/>
</dbReference>
<reference key="1">
    <citation type="journal article" date="2002" name="Proc. Natl. Acad. Sci. U.S.A.">
        <title>The Brucella suis genome reveals fundamental similarities between animal and plant pathogens and symbionts.</title>
        <authorList>
            <person name="Paulsen I.T."/>
            <person name="Seshadri R."/>
            <person name="Nelson K.E."/>
            <person name="Eisen J.A."/>
            <person name="Heidelberg J.F."/>
            <person name="Read T.D."/>
            <person name="Dodson R.J."/>
            <person name="Umayam L.A."/>
            <person name="Brinkac L.M."/>
            <person name="Beanan M.J."/>
            <person name="Daugherty S.C."/>
            <person name="DeBoy R.T."/>
            <person name="Durkin A.S."/>
            <person name="Kolonay J.F."/>
            <person name="Madupu R."/>
            <person name="Nelson W.C."/>
            <person name="Ayodeji B."/>
            <person name="Kraul M."/>
            <person name="Shetty J."/>
            <person name="Malek J.A."/>
            <person name="Van Aken S.E."/>
            <person name="Riedmuller S."/>
            <person name="Tettelin H."/>
            <person name="Gill S.R."/>
            <person name="White O."/>
            <person name="Salzberg S.L."/>
            <person name="Hoover D.L."/>
            <person name="Lindler L.E."/>
            <person name="Halling S.M."/>
            <person name="Boyle S.M."/>
            <person name="Fraser C.M."/>
        </authorList>
    </citation>
    <scope>NUCLEOTIDE SEQUENCE [LARGE SCALE GENOMIC DNA]</scope>
    <source>
        <strain>1330</strain>
    </source>
</reference>
<reference key="2">
    <citation type="journal article" date="2011" name="J. Bacteriol.">
        <title>Revised genome sequence of Brucella suis 1330.</title>
        <authorList>
            <person name="Tae H."/>
            <person name="Shallom S."/>
            <person name="Settlage R."/>
            <person name="Preston D."/>
            <person name="Adams L.G."/>
            <person name="Garner H.R."/>
        </authorList>
    </citation>
    <scope>NUCLEOTIDE SEQUENCE [LARGE SCALE GENOMIC DNA]</scope>
    <source>
        <strain>1330</strain>
    </source>
</reference>
<sequence>MSIDSLPPLREVIERHDLMPKKSLGQNFLFDLNLTSKIARQAGDLRDQPVIEVGPGPGGLTRALLAQGAYVTAIERDDRCLEALAEIAAHYPGRLRIIAGDALEQDFTALFPEGPKPRIVANLPYNVGTQLLLNWLLVEPWPPFYSSMTLMFQREVAERIVAKPDSDHYGRLGVLAGWRTQAKIAFDVPPQAFTPPPKVMSSVVHIVPRETPLPCRAEALGQITQAAFGQRRKMLRQSLKSIGGAALLEKTGIDGTRRAETLSVEEFVALANACLP</sequence>
<feature type="chain" id="PRO_0000101498" description="Ribosomal RNA small subunit methyltransferase A">
    <location>
        <begin position="1"/>
        <end position="276"/>
    </location>
</feature>
<feature type="binding site" evidence="1">
    <location>
        <position position="27"/>
    </location>
    <ligand>
        <name>S-adenosyl-L-methionine</name>
        <dbReference type="ChEBI" id="CHEBI:59789"/>
    </ligand>
</feature>
<feature type="binding site" evidence="1">
    <location>
        <position position="29"/>
    </location>
    <ligand>
        <name>S-adenosyl-L-methionine</name>
        <dbReference type="ChEBI" id="CHEBI:59789"/>
    </ligand>
</feature>
<feature type="binding site" evidence="1">
    <location>
        <position position="54"/>
    </location>
    <ligand>
        <name>S-adenosyl-L-methionine</name>
        <dbReference type="ChEBI" id="CHEBI:59789"/>
    </ligand>
</feature>
<feature type="binding site" evidence="1">
    <location>
        <position position="75"/>
    </location>
    <ligand>
        <name>S-adenosyl-L-methionine</name>
        <dbReference type="ChEBI" id="CHEBI:59789"/>
    </ligand>
</feature>
<feature type="binding site" evidence="1">
    <location>
        <position position="101"/>
    </location>
    <ligand>
        <name>S-adenosyl-L-methionine</name>
        <dbReference type="ChEBI" id="CHEBI:59789"/>
    </ligand>
</feature>
<feature type="binding site" evidence="1">
    <location>
        <position position="122"/>
    </location>
    <ligand>
        <name>S-adenosyl-L-methionine</name>
        <dbReference type="ChEBI" id="CHEBI:59789"/>
    </ligand>
</feature>
<gene>
    <name evidence="1" type="primary">rsmA</name>
    <name evidence="1" type="synonym">ksgA</name>
    <name type="ordered locus">BR0682</name>
    <name type="ordered locus">BS1330_I0678</name>
</gene>
<name>RSMA_BRUSU</name>
<keyword id="KW-0963">Cytoplasm</keyword>
<keyword id="KW-0489">Methyltransferase</keyword>
<keyword id="KW-0694">RNA-binding</keyword>
<keyword id="KW-0698">rRNA processing</keyword>
<keyword id="KW-0949">S-adenosyl-L-methionine</keyword>
<keyword id="KW-0808">Transferase</keyword>
<proteinExistence type="inferred from homology"/>
<organism>
    <name type="scientific">Brucella suis biovar 1 (strain 1330)</name>
    <dbReference type="NCBI Taxonomy" id="204722"/>
    <lineage>
        <taxon>Bacteria</taxon>
        <taxon>Pseudomonadati</taxon>
        <taxon>Pseudomonadota</taxon>
        <taxon>Alphaproteobacteria</taxon>
        <taxon>Hyphomicrobiales</taxon>
        <taxon>Brucellaceae</taxon>
        <taxon>Brucella/Ochrobactrum group</taxon>
        <taxon>Brucella</taxon>
    </lineage>
</organism>
<comment type="function">
    <text evidence="1">Specifically dimethylates two adjacent adenosines (A1518 and A1519) in the loop of a conserved hairpin near the 3'-end of 16S rRNA in the 30S particle. May play a critical role in biogenesis of 30S subunits.</text>
</comment>
<comment type="catalytic activity">
    <reaction evidence="1">
        <text>adenosine(1518)/adenosine(1519) in 16S rRNA + 4 S-adenosyl-L-methionine = N(6)-dimethyladenosine(1518)/N(6)-dimethyladenosine(1519) in 16S rRNA + 4 S-adenosyl-L-homocysteine + 4 H(+)</text>
        <dbReference type="Rhea" id="RHEA:19609"/>
        <dbReference type="Rhea" id="RHEA-COMP:10232"/>
        <dbReference type="Rhea" id="RHEA-COMP:10233"/>
        <dbReference type="ChEBI" id="CHEBI:15378"/>
        <dbReference type="ChEBI" id="CHEBI:57856"/>
        <dbReference type="ChEBI" id="CHEBI:59789"/>
        <dbReference type="ChEBI" id="CHEBI:74411"/>
        <dbReference type="ChEBI" id="CHEBI:74493"/>
        <dbReference type="EC" id="2.1.1.182"/>
    </reaction>
</comment>
<comment type="subcellular location">
    <subcellularLocation>
        <location evidence="1">Cytoplasm</location>
    </subcellularLocation>
</comment>
<comment type="similarity">
    <text evidence="1">Belongs to the class I-like SAM-binding methyltransferase superfamily. rRNA adenine N(6)-methyltransferase family. RsmA subfamily.</text>
</comment>
<accession>Q8G1N0</accession>
<accession>G0K823</accession>
<evidence type="ECO:0000255" key="1">
    <source>
        <dbReference type="HAMAP-Rule" id="MF_00607"/>
    </source>
</evidence>
<protein>
    <recommendedName>
        <fullName evidence="1">Ribosomal RNA small subunit methyltransferase A</fullName>
        <ecNumber evidence="1">2.1.1.182</ecNumber>
    </recommendedName>
    <alternativeName>
        <fullName evidence="1">16S rRNA (adenine(1518)-N(6)/adenine(1519)-N(6))-dimethyltransferase</fullName>
    </alternativeName>
    <alternativeName>
        <fullName evidence="1">16S rRNA dimethyladenosine transferase</fullName>
    </alternativeName>
    <alternativeName>
        <fullName evidence="1">16S rRNA dimethylase</fullName>
    </alternativeName>
    <alternativeName>
        <fullName evidence="1">S-adenosylmethionine-6-N', N'-adenosyl(rRNA) dimethyltransferase</fullName>
    </alternativeName>
</protein>